<organism>
    <name type="scientific">Bacillus pumilus (strain SAFR-032)</name>
    <dbReference type="NCBI Taxonomy" id="315750"/>
    <lineage>
        <taxon>Bacteria</taxon>
        <taxon>Bacillati</taxon>
        <taxon>Bacillota</taxon>
        <taxon>Bacilli</taxon>
        <taxon>Bacillales</taxon>
        <taxon>Bacillaceae</taxon>
        <taxon>Bacillus</taxon>
    </lineage>
</organism>
<feature type="chain" id="PRO_0000346178" description="D-ribose pyranase">
    <location>
        <begin position="1"/>
        <end position="130"/>
    </location>
</feature>
<feature type="active site" description="Proton donor" evidence="1">
    <location>
        <position position="20"/>
    </location>
</feature>
<feature type="binding site" evidence="1">
    <location>
        <position position="28"/>
    </location>
    <ligand>
        <name>substrate</name>
    </ligand>
</feature>
<feature type="binding site" evidence="1">
    <location>
        <position position="97"/>
    </location>
    <ligand>
        <name>substrate</name>
    </ligand>
</feature>
<feature type="binding site" evidence="1">
    <location>
        <begin position="119"/>
        <end position="121"/>
    </location>
    <ligand>
        <name>substrate</name>
    </ligand>
</feature>
<keyword id="KW-0119">Carbohydrate metabolism</keyword>
<keyword id="KW-0963">Cytoplasm</keyword>
<keyword id="KW-0413">Isomerase</keyword>
<dbReference type="EC" id="5.4.99.62" evidence="1"/>
<dbReference type="EMBL" id="CP000813">
    <property type="protein sequence ID" value="ABV63918.1"/>
    <property type="molecule type" value="Genomic_DNA"/>
</dbReference>
<dbReference type="RefSeq" id="WP_012011495.1">
    <property type="nucleotide sequence ID" value="NZ_VEIS01000002.1"/>
</dbReference>
<dbReference type="SMR" id="A8FI51"/>
<dbReference type="STRING" id="315750.BPUM_3265"/>
<dbReference type="GeneID" id="5622555"/>
<dbReference type="KEGG" id="bpu:BPUM_3265"/>
<dbReference type="eggNOG" id="COG1869">
    <property type="taxonomic scope" value="Bacteria"/>
</dbReference>
<dbReference type="HOGENOM" id="CLU_135498_0_0_9"/>
<dbReference type="OrthoDB" id="9805009at2"/>
<dbReference type="UniPathway" id="UPA00916">
    <property type="reaction ID" value="UER00888"/>
</dbReference>
<dbReference type="Proteomes" id="UP000001355">
    <property type="component" value="Chromosome"/>
</dbReference>
<dbReference type="GO" id="GO:0005829">
    <property type="term" value="C:cytosol"/>
    <property type="evidence" value="ECO:0007669"/>
    <property type="project" value="TreeGrafter"/>
</dbReference>
<dbReference type="GO" id="GO:0062193">
    <property type="term" value="F:D-ribose pyranase activity"/>
    <property type="evidence" value="ECO:0007669"/>
    <property type="project" value="UniProtKB-EC"/>
</dbReference>
<dbReference type="GO" id="GO:0016872">
    <property type="term" value="F:intramolecular lyase activity"/>
    <property type="evidence" value="ECO:0007669"/>
    <property type="project" value="UniProtKB-UniRule"/>
</dbReference>
<dbReference type="GO" id="GO:0048029">
    <property type="term" value="F:monosaccharide binding"/>
    <property type="evidence" value="ECO:0007669"/>
    <property type="project" value="InterPro"/>
</dbReference>
<dbReference type="GO" id="GO:0019303">
    <property type="term" value="P:D-ribose catabolic process"/>
    <property type="evidence" value="ECO:0007669"/>
    <property type="project" value="UniProtKB-UniRule"/>
</dbReference>
<dbReference type="Gene3D" id="3.40.1650.10">
    <property type="entry name" value="RbsD-like domain"/>
    <property type="match status" value="1"/>
</dbReference>
<dbReference type="HAMAP" id="MF_01661">
    <property type="entry name" value="D_rib_pyranase"/>
    <property type="match status" value="1"/>
</dbReference>
<dbReference type="InterPro" id="IPR023064">
    <property type="entry name" value="D-ribose_pyranase"/>
</dbReference>
<dbReference type="InterPro" id="IPR023750">
    <property type="entry name" value="RbsD-like_sf"/>
</dbReference>
<dbReference type="InterPro" id="IPR007721">
    <property type="entry name" value="RbsD_FucU"/>
</dbReference>
<dbReference type="NCBIfam" id="NF008761">
    <property type="entry name" value="PRK11797.1"/>
    <property type="match status" value="1"/>
</dbReference>
<dbReference type="PANTHER" id="PTHR37831">
    <property type="entry name" value="D-RIBOSE PYRANASE"/>
    <property type="match status" value="1"/>
</dbReference>
<dbReference type="PANTHER" id="PTHR37831:SF1">
    <property type="entry name" value="D-RIBOSE PYRANASE"/>
    <property type="match status" value="1"/>
</dbReference>
<dbReference type="Pfam" id="PF05025">
    <property type="entry name" value="RbsD_FucU"/>
    <property type="match status" value="1"/>
</dbReference>
<dbReference type="SUPFAM" id="SSF102546">
    <property type="entry name" value="RbsD-like"/>
    <property type="match status" value="1"/>
</dbReference>
<reference key="1">
    <citation type="journal article" date="2007" name="PLoS ONE">
        <title>Paradoxical DNA repair and peroxide resistance gene conservation in Bacillus pumilus SAFR-032.</title>
        <authorList>
            <person name="Gioia J."/>
            <person name="Yerrapragada S."/>
            <person name="Qin X."/>
            <person name="Jiang H."/>
            <person name="Igboeli O.C."/>
            <person name="Muzny D."/>
            <person name="Dugan-Rocha S."/>
            <person name="Ding Y."/>
            <person name="Hawes A."/>
            <person name="Liu W."/>
            <person name="Perez L."/>
            <person name="Kovar C."/>
            <person name="Dinh H."/>
            <person name="Lee S."/>
            <person name="Nazareth L."/>
            <person name="Blyth P."/>
            <person name="Holder M."/>
            <person name="Buhay C."/>
            <person name="Tirumalai M.R."/>
            <person name="Liu Y."/>
            <person name="Dasgupta I."/>
            <person name="Bokhetache L."/>
            <person name="Fujita M."/>
            <person name="Karouia F."/>
            <person name="Eswara Moorthy P."/>
            <person name="Siefert J."/>
            <person name="Uzman A."/>
            <person name="Buzumbo P."/>
            <person name="Verma A."/>
            <person name="Zwiya H."/>
            <person name="McWilliams B.D."/>
            <person name="Olowu A."/>
            <person name="Clinkenbeard K.D."/>
            <person name="Newcombe D."/>
            <person name="Golebiewski L."/>
            <person name="Petrosino J.F."/>
            <person name="Nicholson W.L."/>
            <person name="Fox G.E."/>
            <person name="Venkateswaran K."/>
            <person name="Highlander S.K."/>
            <person name="Weinstock G.M."/>
        </authorList>
    </citation>
    <scope>NUCLEOTIDE SEQUENCE [LARGE SCALE GENOMIC DNA]</scope>
    <source>
        <strain>SAFR-032</strain>
    </source>
</reference>
<protein>
    <recommendedName>
        <fullName evidence="1">D-ribose pyranase</fullName>
        <ecNumber evidence="1">5.4.99.62</ecNumber>
    </recommendedName>
</protein>
<gene>
    <name evidence="1" type="primary">rbsD</name>
    <name type="ordered locus">BPUM_3265</name>
</gene>
<sequence length="130" mass="14212">MKKNGILNSHIAKVLADLGHTDTIVIADCGLPIPEGPVKIDLSLTIGTPSFQEVTSLLLQEMAVEHITVASEIQEANERDHLFLKKAFSKPLHDVDHETFKDMTKQAKAVIRTGEATPYANCILHAGVIF</sequence>
<comment type="function">
    <text evidence="1">Catalyzes the interconversion of beta-pyran and beta-furan forms of D-ribose.</text>
</comment>
<comment type="catalytic activity">
    <reaction evidence="1">
        <text>beta-D-ribopyranose = beta-D-ribofuranose</text>
        <dbReference type="Rhea" id="RHEA:25432"/>
        <dbReference type="ChEBI" id="CHEBI:27476"/>
        <dbReference type="ChEBI" id="CHEBI:47002"/>
        <dbReference type="EC" id="5.4.99.62"/>
    </reaction>
</comment>
<comment type="pathway">
    <text evidence="1">Carbohydrate metabolism; D-ribose degradation; D-ribose 5-phosphate from beta-D-ribopyranose: step 1/2.</text>
</comment>
<comment type="subunit">
    <text evidence="1">Homodecamer.</text>
</comment>
<comment type="subcellular location">
    <subcellularLocation>
        <location evidence="1">Cytoplasm</location>
    </subcellularLocation>
</comment>
<comment type="similarity">
    <text evidence="1">Belongs to the RbsD / FucU family. RbsD subfamily.</text>
</comment>
<evidence type="ECO:0000255" key="1">
    <source>
        <dbReference type="HAMAP-Rule" id="MF_01661"/>
    </source>
</evidence>
<name>RBSD_BACP2</name>
<accession>A8FI51</accession>
<proteinExistence type="inferred from homology"/>